<feature type="chain" id="PRO_0000107487" description="Uncharacterized protein MJECS06">
    <location>
        <begin position="1"/>
        <end position="140"/>
    </location>
</feature>
<feature type="zinc finger region" description="C2H2-type">
    <location>
        <begin position="21"/>
        <end position="42"/>
    </location>
</feature>
<accession>Q60305</accession>
<sequence length="140" mass="16592">MNIDDYIEKLEIQKEGFFYKCPYCNYTNADVKAIKKHIKSKHYDIIAKEVENLNKQNKPQRKPMKKQPKKKDDDYKDYMLLFAHKKKCKIYLDNGMIVEGTVKAKDRFNIMVLDAKVDDKEVERIIIQKGHIVALIPLEE</sequence>
<protein>
    <recommendedName>
        <fullName>Uncharacterized protein MJECS06</fullName>
    </recommendedName>
</protein>
<dbReference type="EMBL" id="L77119">
    <property type="protein sequence ID" value="AAC37064.1"/>
    <property type="molecule type" value="Genomic_DNA"/>
</dbReference>
<dbReference type="PIR" id="F64516">
    <property type="entry name" value="F64516"/>
</dbReference>
<dbReference type="RefSeq" id="WP_010890099.1">
    <property type="nucleotide sequence ID" value="NC_001733.1"/>
</dbReference>
<dbReference type="SMR" id="Q60305"/>
<dbReference type="PaxDb" id="243232-MJ_ECS06"/>
<dbReference type="EnsemblBacteria" id="AAC37064">
    <property type="protein sequence ID" value="AAC37064"/>
    <property type="gene ID" value="MJ_ECS06"/>
</dbReference>
<dbReference type="GeneID" id="1450833"/>
<dbReference type="KEGG" id="mja:MJ_ECS06"/>
<dbReference type="eggNOG" id="arCOG12102">
    <property type="taxonomic scope" value="Archaea"/>
</dbReference>
<dbReference type="HOGENOM" id="CLU_1801728_0_0_2"/>
<dbReference type="InParanoid" id="Q60305"/>
<dbReference type="OrthoDB" id="377359at2157"/>
<dbReference type="Proteomes" id="UP000000805">
    <property type="component" value="Plasmid pDSM2661_2"/>
</dbReference>
<dbReference type="GO" id="GO:0008270">
    <property type="term" value="F:zinc ion binding"/>
    <property type="evidence" value="ECO:0007669"/>
    <property type="project" value="UniProtKB-KW"/>
</dbReference>
<dbReference type="Gene3D" id="2.30.30.100">
    <property type="match status" value="1"/>
</dbReference>
<dbReference type="InterPro" id="IPR013087">
    <property type="entry name" value="Znf_C2H2_type"/>
</dbReference>
<dbReference type="SMART" id="SM00355">
    <property type="entry name" value="ZnF_C2H2"/>
    <property type="match status" value="1"/>
</dbReference>
<keyword id="KW-0479">Metal-binding</keyword>
<keyword id="KW-0614">Plasmid</keyword>
<keyword id="KW-1185">Reference proteome</keyword>
<keyword id="KW-0862">Zinc</keyword>
<keyword id="KW-0863">Zinc-finger</keyword>
<comment type="similarity">
    <text evidence="1">To M.jannaschii MJECL27.</text>
</comment>
<gene>
    <name type="ordered locus">MJECS06</name>
</gene>
<proteinExistence type="predicted"/>
<reference key="1">
    <citation type="journal article" date="1996" name="Science">
        <title>Complete genome sequence of the methanogenic archaeon, Methanococcus jannaschii.</title>
        <authorList>
            <person name="Bult C.J."/>
            <person name="White O."/>
            <person name="Olsen G.J."/>
            <person name="Zhou L."/>
            <person name="Fleischmann R.D."/>
            <person name="Sutton G.G."/>
            <person name="Blake J.A."/>
            <person name="FitzGerald L.M."/>
            <person name="Clayton R.A."/>
            <person name="Gocayne J.D."/>
            <person name="Kerlavage A.R."/>
            <person name="Dougherty B.A."/>
            <person name="Tomb J.-F."/>
            <person name="Adams M.D."/>
            <person name="Reich C.I."/>
            <person name="Overbeek R."/>
            <person name="Kirkness E.F."/>
            <person name="Weinstock K.G."/>
            <person name="Merrick J.M."/>
            <person name="Glodek A."/>
            <person name="Scott J.L."/>
            <person name="Geoghagen N.S.M."/>
            <person name="Weidman J.F."/>
            <person name="Fuhrmann J.L."/>
            <person name="Nguyen D."/>
            <person name="Utterback T.R."/>
            <person name="Kelley J.M."/>
            <person name="Peterson J.D."/>
            <person name="Sadow P.W."/>
            <person name="Hanna M.C."/>
            <person name="Cotton M.D."/>
            <person name="Roberts K.M."/>
            <person name="Hurst M.A."/>
            <person name="Kaine B.P."/>
            <person name="Borodovsky M."/>
            <person name="Klenk H.-P."/>
            <person name="Fraser C.M."/>
            <person name="Smith H.O."/>
            <person name="Woese C.R."/>
            <person name="Venter J.C."/>
        </authorList>
    </citation>
    <scope>NUCLEOTIDE SEQUENCE [LARGE SCALE GENOMIC DNA]</scope>
    <source>
        <strain>ATCC 43067 / DSM 2661 / JAL-1 / JCM 10045 / NBRC 100440</strain>
    </source>
</reference>
<organism>
    <name type="scientific">Methanocaldococcus jannaschii (strain ATCC 43067 / DSM 2661 / JAL-1 / JCM 10045 / NBRC 100440)</name>
    <name type="common">Methanococcus jannaschii</name>
    <dbReference type="NCBI Taxonomy" id="243232"/>
    <lineage>
        <taxon>Archaea</taxon>
        <taxon>Methanobacteriati</taxon>
        <taxon>Methanobacteriota</taxon>
        <taxon>Methanomada group</taxon>
        <taxon>Methanococci</taxon>
        <taxon>Methanococcales</taxon>
        <taxon>Methanocaldococcaceae</taxon>
        <taxon>Methanocaldococcus</taxon>
    </lineage>
</organism>
<geneLocation type="plasmid">
    <name>small ECE</name>
</geneLocation>
<name>Y3406_METJA</name>
<evidence type="ECO:0000305" key="1"/>